<evidence type="ECO:0000250" key="1"/>
<evidence type="ECO:0000255" key="2"/>
<evidence type="ECO:0000256" key="3">
    <source>
        <dbReference type="SAM" id="MobiDB-lite"/>
    </source>
</evidence>
<evidence type="ECO:0000305" key="4"/>
<gene>
    <name type="primary">SPATA31A6</name>
    <name type="synonym">FAM75A6</name>
</gene>
<dbReference type="EMBL" id="AL445584">
    <property type="status" value="NOT_ANNOTATED_CDS"/>
    <property type="molecule type" value="Genomic_DNA"/>
</dbReference>
<dbReference type="CCDS" id="CCDS75837.1"/>
<dbReference type="RefSeq" id="NP_001138668.1">
    <property type="nucleotide sequence ID" value="NM_001145196.1"/>
</dbReference>
<dbReference type="BioGRID" id="133245">
    <property type="interactions" value="2"/>
</dbReference>
<dbReference type="FunCoup" id="Q5VVP1">
    <property type="interactions" value="1"/>
</dbReference>
<dbReference type="STRING" id="9606.ENSP00000329825"/>
<dbReference type="GlyGen" id="Q5VVP1">
    <property type="glycosylation" value="1 site, 1 O-linked glycan (1 site)"/>
</dbReference>
<dbReference type="iPTMnet" id="Q5VVP1"/>
<dbReference type="PhosphoSitePlus" id="Q5VVP1"/>
<dbReference type="BioMuta" id="SPATA31A6"/>
<dbReference type="DMDM" id="74747270"/>
<dbReference type="jPOST" id="Q5VVP1"/>
<dbReference type="MassIVE" id="Q5VVP1"/>
<dbReference type="PaxDb" id="9606-ENSP00000329825"/>
<dbReference type="PeptideAtlas" id="Q5VVP1"/>
<dbReference type="ProteomicsDB" id="65478"/>
<dbReference type="DNASU" id="389730"/>
<dbReference type="Ensembl" id="ENST00000332857.7">
    <property type="protein sequence ID" value="ENSP00000329825.6"/>
    <property type="gene ID" value="ENSG00000185775.10"/>
</dbReference>
<dbReference type="GeneID" id="389730"/>
<dbReference type="KEGG" id="hsa:389730"/>
<dbReference type="MANE-Select" id="ENST00000332857.7">
    <property type="protein sequence ID" value="ENSP00000329825.6"/>
    <property type="RefSeq nucleotide sequence ID" value="NM_001145196.1"/>
    <property type="RefSeq protein sequence ID" value="NP_001138668.1"/>
</dbReference>
<dbReference type="UCSC" id="uc033csq.2">
    <property type="organism name" value="human"/>
</dbReference>
<dbReference type="AGR" id="HGNC:32006"/>
<dbReference type="CTD" id="389730"/>
<dbReference type="GeneCards" id="SPATA31A6"/>
<dbReference type="HGNC" id="HGNC:32006">
    <property type="gene designation" value="SPATA31A6"/>
</dbReference>
<dbReference type="HPA" id="ENSG00000185775">
    <property type="expression patterns" value="Tissue enriched (testis)"/>
</dbReference>
<dbReference type="neXtProt" id="NX_Q5VVP1"/>
<dbReference type="OpenTargets" id="ENSG00000185775"/>
<dbReference type="PharmGKB" id="PA164719932"/>
<dbReference type="VEuPathDB" id="HostDB:ENSG00000185775"/>
<dbReference type="eggNOG" id="ENOG502RU0E">
    <property type="taxonomic scope" value="Eukaryota"/>
</dbReference>
<dbReference type="GeneTree" id="ENSGT00950000183043"/>
<dbReference type="HOGENOM" id="CLU_005668_2_0_1"/>
<dbReference type="InParanoid" id="Q5VVP1"/>
<dbReference type="OMA" id="SHTPWSA"/>
<dbReference type="OrthoDB" id="9616581at2759"/>
<dbReference type="PAN-GO" id="Q5VVP1">
    <property type="GO annotations" value="0 GO annotations based on evolutionary models"/>
</dbReference>
<dbReference type="PhylomeDB" id="Q5VVP1"/>
<dbReference type="TreeFam" id="TF338531"/>
<dbReference type="BioGRID-ORCS" id="389730">
    <property type="hits" value="310 hits in 1121 CRISPR screens"/>
</dbReference>
<dbReference type="GenomeRNAi" id="389730"/>
<dbReference type="Pharos" id="Q5VVP1">
    <property type="development level" value="Tdark"/>
</dbReference>
<dbReference type="PRO" id="PR:Q5VVP1"/>
<dbReference type="Proteomes" id="UP000005640">
    <property type="component" value="Chromosome 9"/>
</dbReference>
<dbReference type="RNAct" id="Q5VVP1">
    <property type="molecule type" value="protein"/>
</dbReference>
<dbReference type="Bgee" id="ENSG00000185775">
    <property type="expression patterns" value="Expressed in left testis and 6 other cell types or tissues"/>
</dbReference>
<dbReference type="GO" id="GO:0016020">
    <property type="term" value="C:membrane"/>
    <property type="evidence" value="ECO:0007669"/>
    <property type="project" value="UniProtKB-SubCell"/>
</dbReference>
<dbReference type="GO" id="GO:0030154">
    <property type="term" value="P:cell differentiation"/>
    <property type="evidence" value="ECO:0007669"/>
    <property type="project" value="UniProtKB-KW"/>
</dbReference>
<dbReference type="GO" id="GO:0007283">
    <property type="term" value="P:spermatogenesis"/>
    <property type="evidence" value="ECO:0007669"/>
    <property type="project" value="UniProtKB-KW"/>
</dbReference>
<dbReference type="InterPro" id="IPR039509">
    <property type="entry name" value="SPATA31"/>
</dbReference>
<dbReference type="InterPro" id="IPR027970">
    <property type="entry name" value="SPATA31F3-like"/>
</dbReference>
<dbReference type="PANTHER" id="PTHR21859">
    <property type="entry name" value="ACROSOME-SPECIFIC PROTEIN"/>
    <property type="match status" value="1"/>
</dbReference>
<dbReference type="PANTHER" id="PTHR21859:SF55">
    <property type="entry name" value="SPERMATOGENESIS-ASSOCIATED PROTEIN 31A1-RELATED"/>
    <property type="match status" value="1"/>
</dbReference>
<dbReference type="Pfam" id="PF15371">
    <property type="entry name" value="DUF4599"/>
    <property type="match status" value="1"/>
</dbReference>
<dbReference type="Pfam" id="PF14650">
    <property type="entry name" value="FAM75"/>
    <property type="match status" value="1"/>
</dbReference>
<organism>
    <name type="scientific">Homo sapiens</name>
    <name type="common">Human</name>
    <dbReference type="NCBI Taxonomy" id="9606"/>
    <lineage>
        <taxon>Eukaryota</taxon>
        <taxon>Metazoa</taxon>
        <taxon>Chordata</taxon>
        <taxon>Craniata</taxon>
        <taxon>Vertebrata</taxon>
        <taxon>Euteleostomi</taxon>
        <taxon>Mammalia</taxon>
        <taxon>Eutheria</taxon>
        <taxon>Euarchontoglires</taxon>
        <taxon>Primates</taxon>
        <taxon>Haplorrhini</taxon>
        <taxon>Catarrhini</taxon>
        <taxon>Hominidae</taxon>
        <taxon>Homo</taxon>
    </lineage>
</organism>
<proteinExistence type="inferred from homology"/>
<keyword id="KW-0221">Differentiation</keyword>
<keyword id="KW-0472">Membrane</keyword>
<keyword id="KW-1185">Reference proteome</keyword>
<keyword id="KW-0744">Spermatogenesis</keyword>
<keyword id="KW-0812">Transmembrane</keyword>
<keyword id="KW-1133">Transmembrane helix</keyword>
<protein>
    <recommendedName>
        <fullName>Spermatogenesis-associated protein 31A6</fullName>
    </recommendedName>
    <alternativeName>
        <fullName>Protein FAM75A6</fullName>
    </alternativeName>
</protein>
<name>S31A6_HUMAN</name>
<comment type="function">
    <text evidence="1">May play a role in spermatogenesis.</text>
</comment>
<comment type="subcellular location">
    <subcellularLocation>
        <location evidence="4">Membrane</location>
        <topology evidence="4">Single-pass membrane protein</topology>
    </subcellularLocation>
</comment>
<comment type="similarity">
    <text evidence="4">Belongs to the SPATA31 family.</text>
</comment>
<feature type="chain" id="PRO_0000297668" description="Spermatogenesis-associated protein 31A6">
    <location>
        <begin position="1"/>
        <end position="1343"/>
    </location>
</feature>
<feature type="transmembrane region" description="Helical" evidence="2">
    <location>
        <begin position="23"/>
        <end position="43"/>
    </location>
</feature>
<feature type="region of interest" description="Disordered" evidence="3">
    <location>
        <begin position="55"/>
        <end position="88"/>
    </location>
</feature>
<feature type="region of interest" description="Disordered" evidence="3">
    <location>
        <begin position="106"/>
        <end position="235"/>
    </location>
</feature>
<feature type="region of interest" description="Disordered" evidence="3">
    <location>
        <begin position="624"/>
        <end position="654"/>
    </location>
</feature>
<feature type="region of interest" description="Disordered" evidence="3">
    <location>
        <begin position="895"/>
        <end position="951"/>
    </location>
</feature>
<feature type="region of interest" description="Disordered" evidence="3">
    <location>
        <begin position="1080"/>
        <end position="1156"/>
    </location>
</feature>
<feature type="region of interest" description="Disordered" evidence="3">
    <location>
        <begin position="1309"/>
        <end position="1331"/>
    </location>
</feature>
<feature type="compositionally biased region" description="Basic residues" evidence="3">
    <location>
        <begin position="60"/>
        <end position="82"/>
    </location>
</feature>
<feature type="compositionally biased region" description="Polar residues" evidence="3">
    <location>
        <begin position="165"/>
        <end position="178"/>
    </location>
</feature>
<feature type="compositionally biased region" description="Pro residues" evidence="3">
    <location>
        <begin position="198"/>
        <end position="222"/>
    </location>
</feature>
<feature type="compositionally biased region" description="Polar residues" evidence="3">
    <location>
        <begin position="627"/>
        <end position="647"/>
    </location>
</feature>
<feature type="compositionally biased region" description="Polar residues" evidence="3">
    <location>
        <begin position="923"/>
        <end position="944"/>
    </location>
</feature>
<feature type="compositionally biased region" description="Basic and acidic residues" evidence="3">
    <location>
        <begin position="1104"/>
        <end position="1123"/>
    </location>
</feature>
<feature type="compositionally biased region" description="Basic and acidic residues" evidence="3">
    <location>
        <begin position="1133"/>
        <end position="1142"/>
    </location>
</feature>
<sequence length="1343" mass="147818">MENLPFPLKLLSASSLNAPSSTPWVLDIFLTLVFALGFFFLLLPYLSYFHCDDPPSPSPGKRKCPVGRRRRPRGRMKNHSLRAGRECPRGLEETSDLLSQLQSLLGPHLDKGDFGQLSGPDPPGEVGERAPDGASQSSHEPMEDAAPILSPLASPDPQAKHPQDLASTPSPGPMTTSVSSLSASQPPEPSLPLEHPSPEPPALFPHPPHTPDPLACSPPPPKGFTAPPLRDSTLITPSHCDSVALPLGTVPQSLSPHEDLVASVPAISGLGGSNSHVSASSRWQETARTSCAFNSSVQQDPLSRHPPETCQMEAGSLFLLSSDGQNVVGIQVTETAKVNIWEEKENVGSFTNQMTPEKHLNSLGNLAKSLDAEQDTTNPKPFWNMGENSKQLPGPQKCSDPRLLQESFWKNYSQLFWGLPSLHSESLVANAWVTDRSYTLQSPPFLFNEMSNVCPIQRETTMSPLLFQAQPLSHRQPFISSTPQFLPTPMAQAEAQAHLQSSFPVLSPAFPSLIKNTGVACPASQNKVQALSLPETQHPEWPLLRKQLEGRLALPSRVQKSQDVFSVSTPNLPQESLTSILPENFPVSPELRRQLEQHIKKWIIQHWGNLGRIQESLDLMQLRDESPGTSQAKGKPSPWQSSTSTGESSKEAQKVKFQLERDLCPHLGQILGETPQNLSRDMKSFPRKVLGVTSEESERNLRKPLRSDSGSDLLRCTERTHIENILKAHMGRNLGQTNEGLIPVRVRRSWLAVNQALPVSNTHVKTSNLAAPKSGKACVNTAQVLSFLEPCTQQGLGAHIVRFWAKHRWGLPLRVLKPIQCFKLEKVSSLSLTQLAGPSSATCESGAGSEVEVDMFLRKPPMASLRKQVLTKASDHMPESLLASSPAWKQFQRAPRGIPSWNDHGPLKPPPAGQEGRWPSKPLTYSLTGSTQQSRSLGAQSSKAGETREAVPQCRVPLETCMLANLQATSEDVHGFEAPGTSKSSLHPRVSVSQDPRKLCLMEEVVSEFEPGMATKSETQPQVCAAVVLLPDGQASVVPHASENLVSQVPQGHLQSMPTGNMRASQELHDLMAARRSKLVQEEPRNPNCQGSCKSQRPMFPPIHKSEKSRKPNLEKHEERLEGLRTPQLTPVRKTEDTHQDEGVQLLPSKKQPPSVSHFGENIKQFFQWIFSKKKSKPAPVTAESQKTVKNRSCVYSSSAEAQGLMTAVGQMLDKKMSLCHAHHASKVNQHKQKFQAPVCGFPCNHRHLFYSEHGRILSYAASSQQATLKSQGCPNRDRQIRNQQPLKSVRCNNEQWGLRHPQILHPKKAVSPVSPPQHWPKTSGASSHHHHCPRHCLLWEGI</sequence>
<accession>Q5VVP1</accession>
<reference key="1">
    <citation type="journal article" date="2004" name="Nature">
        <title>DNA sequence and analysis of human chromosome 9.</title>
        <authorList>
            <person name="Humphray S.J."/>
            <person name="Oliver K."/>
            <person name="Hunt A.R."/>
            <person name="Plumb R.W."/>
            <person name="Loveland J.E."/>
            <person name="Howe K.L."/>
            <person name="Andrews T.D."/>
            <person name="Searle S."/>
            <person name="Hunt S.E."/>
            <person name="Scott C.E."/>
            <person name="Jones M.C."/>
            <person name="Ainscough R."/>
            <person name="Almeida J.P."/>
            <person name="Ambrose K.D."/>
            <person name="Ashwell R.I.S."/>
            <person name="Babbage A.K."/>
            <person name="Babbage S."/>
            <person name="Bagguley C.L."/>
            <person name="Bailey J."/>
            <person name="Banerjee R."/>
            <person name="Barker D.J."/>
            <person name="Barlow K.F."/>
            <person name="Bates K."/>
            <person name="Beasley H."/>
            <person name="Beasley O."/>
            <person name="Bird C.P."/>
            <person name="Bray-Allen S."/>
            <person name="Brown A.J."/>
            <person name="Brown J.Y."/>
            <person name="Burford D."/>
            <person name="Burrill W."/>
            <person name="Burton J."/>
            <person name="Carder C."/>
            <person name="Carter N.P."/>
            <person name="Chapman J.C."/>
            <person name="Chen Y."/>
            <person name="Clarke G."/>
            <person name="Clark S.Y."/>
            <person name="Clee C.M."/>
            <person name="Clegg S."/>
            <person name="Collier R.E."/>
            <person name="Corby N."/>
            <person name="Crosier M."/>
            <person name="Cummings A.T."/>
            <person name="Davies J."/>
            <person name="Dhami P."/>
            <person name="Dunn M."/>
            <person name="Dutta I."/>
            <person name="Dyer L.W."/>
            <person name="Earthrowl M.E."/>
            <person name="Faulkner L."/>
            <person name="Fleming C.J."/>
            <person name="Frankish A."/>
            <person name="Frankland J.A."/>
            <person name="French L."/>
            <person name="Fricker D.G."/>
            <person name="Garner P."/>
            <person name="Garnett J."/>
            <person name="Ghori J."/>
            <person name="Gilbert J.G.R."/>
            <person name="Glison C."/>
            <person name="Grafham D.V."/>
            <person name="Gribble S."/>
            <person name="Griffiths C."/>
            <person name="Griffiths-Jones S."/>
            <person name="Grocock R."/>
            <person name="Guy J."/>
            <person name="Hall R.E."/>
            <person name="Hammond S."/>
            <person name="Harley J.L."/>
            <person name="Harrison E.S.I."/>
            <person name="Hart E.A."/>
            <person name="Heath P.D."/>
            <person name="Henderson C.D."/>
            <person name="Hopkins B.L."/>
            <person name="Howard P.J."/>
            <person name="Howden P.J."/>
            <person name="Huckle E."/>
            <person name="Johnson C."/>
            <person name="Johnson D."/>
            <person name="Joy A.A."/>
            <person name="Kay M."/>
            <person name="Keenan S."/>
            <person name="Kershaw J.K."/>
            <person name="Kimberley A.M."/>
            <person name="King A."/>
            <person name="Knights A."/>
            <person name="Laird G.K."/>
            <person name="Langford C."/>
            <person name="Lawlor S."/>
            <person name="Leongamornlert D.A."/>
            <person name="Leversha M."/>
            <person name="Lloyd C."/>
            <person name="Lloyd D.M."/>
            <person name="Lovell J."/>
            <person name="Martin S."/>
            <person name="Mashreghi-Mohammadi M."/>
            <person name="Matthews L."/>
            <person name="McLaren S."/>
            <person name="McLay K.E."/>
            <person name="McMurray A."/>
            <person name="Milne S."/>
            <person name="Nickerson T."/>
            <person name="Nisbett J."/>
            <person name="Nordsiek G."/>
            <person name="Pearce A.V."/>
            <person name="Peck A.I."/>
            <person name="Porter K.M."/>
            <person name="Pandian R."/>
            <person name="Pelan S."/>
            <person name="Phillimore B."/>
            <person name="Povey S."/>
            <person name="Ramsey Y."/>
            <person name="Rand V."/>
            <person name="Scharfe M."/>
            <person name="Sehra H.K."/>
            <person name="Shownkeen R."/>
            <person name="Sims S.K."/>
            <person name="Skuce C.D."/>
            <person name="Smith M."/>
            <person name="Steward C.A."/>
            <person name="Swarbreck D."/>
            <person name="Sycamore N."/>
            <person name="Tester J."/>
            <person name="Thorpe A."/>
            <person name="Tracey A."/>
            <person name="Tromans A."/>
            <person name="Thomas D.W."/>
            <person name="Wall M."/>
            <person name="Wallis J.M."/>
            <person name="West A.P."/>
            <person name="Whitehead S.L."/>
            <person name="Willey D.L."/>
            <person name="Williams S.A."/>
            <person name="Wilming L."/>
            <person name="Wray P.W."/>
            <person name="Young L."/>
            <person name="Ashurst J.L."/>
            <person name="Coulson A."/>
            <person name="Blocker H."/>
            <person name="Durbin R.M."/>
            <person name="Sulston J.E."/>
            <person name="Hubbard T."/>
            <person name="Jackson M.J."/>
            <person name="Bentley D.R."/>
            <person name="Beck S."/>
            <person name="Rogers J."/>
            <person name="Dunham I."/>
        </authorList>
    </citation>
    <scope>NUCLEOTIDE SEQUENCE [LARGE SCALE GENOMIC DNA]</scope>
</reference>